<proteinExistence type="inferred from homology"/>
<keyword id="KW-0143">Chaperone</keyword>
<keyword id="KW-0963">Cytoplasm</keyword>
<keyword id="KW-0346">Stress response</keyword>
<sequence length="197" mass="21840">MSSKEQKTPEGQAPEEIIMDRHEEIEAVEPEASAEQVDPRDEKIANLEAQLAEAQTRERDGILRVKAEMENLRRRTELDIEKAHKFALEKFINELLPVIDSLDRALEVADKANPDMSAMVEGIELTLKSMLDVVRKFGVEVIAETNVPLDPNVHQAIAMVESDDVAPGNVLGIMQKGYTLNGRTIRAAMVTVAKAKA</sequence>
<organism>
    <name type="scientific">Shigella flexneri serotype 5b (strain 8401)</name>
    <dbReference type="NCBI Taxonomy" id="373384"/>
    <lineage>
        <taxon>Bacteria</taxon>
        <taxon>Pseudomonadati</taxon>
        <taxon>Pseudomonadota</taxon>
        <taxon>Gammaproteobacteria</taxon>
        <taxon>Enterobacterales</taxon>
        <taxon>Enterobacteriaceae</taxon>
        <taxon>Shigella</taxon>
    </lineage>
</organism>
<gene>
    <name evidence="1" type="primary">grpE</name>
    <name type="ordered locus">SFV_2857</name>
</gene>
<accession>Q0T181</accession>
<feature type="chain" id="PRO_1000053641" description="Protein GrpE">
    <location>
        <begin position="1"/>
        <end position="197"/>
    </location>
</feature>
<feature type="region of interest" description="Disordered" evidence="2">
    <location>
        <begin position="1"/>
        <end position="40"/>
    </location>
</feature>
<comment type="function">
    <text evidence="1">Participates actively in the response to hyperosmotic and heat shock by preventing the aggregation of stress-denatured proteins, in association with DnaK and GrpE. It is the nucleotide exchange factor for DnaK and may function as a thermosensor. Unfolded proteins bind initially to DnaJ; upon interaction with the DnaJ-bound protein, DnaK hydrolyzes its bound ATP, resulting in the formation of a stable complex. GrpE releases ADP from DnaK; ATP binding to DnaK triggers the release of the substrate protein, thus completing the reaction cycle. Several rounds of ATP-dependent interactions between DnaJ, DnaK and GrpE are required for fully efficient folding.</text>
</comment>
<comment type="subunit">
    <text evidence="1">Homodimer.</text>
</comment>
<comment type="subcellular location">
    <subcellularLocation>
        <location evidence="1">Cytoplasm</location>
    </subcellularLocation>
</comment>
<comment type="similarity">
    <text evidence="1">Belongs to the GrpE family.</text>
</comment>
<dbReference type="EMBL" id="CP000266">
    <property type="protein sequence ID" value="ABF04934.1"/>
    <property type="molecule type" value="Genomic_DNA"/>
</dbReference>
<dbReference type="RefSeq" id="WP_005105765.1">
    <property type="nucleotide sequence ID" value="NC_008258.1"/>
</dbReference>
<dbReference type="SMR" id="Q0T181"/>
<dbReference type="KEGG" id="sfv:SFV_2857"/>
<dbReference type="HOGENOM" id="CLU_057217_6_0_6"/>
<dbReference type="Proteomes" id="UP000000659">
    <property type="component" value="Chromosome"/>
</dbReference>
<dbReference type="GO" id="GO:0005829">
    <property type="term" value="C:cytosol"/>
    <property type="evidence" value="ECO:0007669"/>
    <property type="project" value="TreeGrafter"/>
</dbReference>
<dbReference type="GO" id="GO:0000774">
    <property type="term" value="F:adenyl-nucleotide exchange factor activity"/>
    <property type="evidence" value="ECO:0007669"/>
    <property type="project" value="InterPro"/>
</dbReference>
<dbReference type="GO" id="GO:0042803">
    <property type="term" value="F:protein homodimerization activity"/>
    <property type="evidence" value="ECO:0007669"/>
    <property type="project" value="InterPro"/>
</dbReference>
<dbReference type="GO" id="GO:0051087">
    <property type="term" value="F:protein-folding chaperone binding"/>
    <property type="evidence" value="ECO:0007669"/>
    <property type="project" value="InterPro"/>
</dbReference>
<dbReference type="GO" id="GO:0051082">
    <property type="term" value="F:unfolded protein binding"/>
    <property type="evidence" value="ECO:0007669"/>
    <property type="project" value="TreeGrafter"/>
</dbReference>
<dbReference type="GO" id="GO:0006457">
    <property type="term" value="P:protein folding"/>
    <property type="evidence" value="ECO:0007669"/>
    <property type="project" value="InterPro"/>
</dbReference>
<dbReference type="CDD" id="cd00446">
    <property type="entry name" value="GrpE"/>
    <property type="match status" value="1"/>
</dbReference>
<dbReference type="FunFam" id="2.30.22.10:FF:000001">
    <property type="entry name" value="Protein GrpE"/>
    <property type="match status" value="1"/>
</dbReference>
<dbReference type="FunFam" id="3.90.20.20:FF:000001">
    <property type="entry name" value="Protein GrpE"/>
    <property type="match status" value="1"/>
</dbReference>
<dbReference type="Gene3D" id="3.90.20.20">
    <property type="match status" value="1"/>
</dbReference>
<dbReference type="Gene3D" id="2.30.22.10">
    <property type="entry name" value="Head domain of nucleotide exchange factor GrpE"/>
    <property type="match status" value="1"/>
</dbReference>
<dbReference type="HAMAP" id="MF_01151">
    <property type="entry name" value="GrpE"/>
    <property type="match status" value="1"/>
</dbReference>
<dbReference type="InterPro" id="IPR000740">
    <property type="entry name" value="GrpE"/>
</dbReference>
<dbReference type="InterPro" id="IPR013805">
    <property type="entry name" value="GrpE_coiled_coil"/>
</dbReference>
<dbReference type="InterPro" id="IPR009012">
    <property type="entry name" value="GrpE_head"/>
</dbReference>
<dbReference type="NCBIfam" id="NF007655">
    <property type="entry name" value="PRK10325.1"/>
    <property type="match status" value="1"/>
</dbReference>
<dbReference type="NCBIfam" id="NF010738">
    <property type="entry name" value="PRK14140.1"/>
    <property type="match status" value="1"/>
</dbReference>
<dbReference type="NCBIfam" id="NF010748">
    <property type="entry name" value="PRK14150.1"/>
    <property type="match status" value="1"/>
</dbReference>
<dbReference type="PANTHER" id="PTHR21237">
    <property type="entry name" value="GRPE PROTEIN"/>
    <property type="match status" value="1"/>
</dbReference>
<dbReference type="PANTHER" id="PTHR21237:SF23">
    <property type="entry name" value="GRPE PROTEIN HOMOLOG, MITOCHONDRIAL"/>
    <property type="match status" value="1"/>
</dbReference>
<dbReference type="Pfam" id="PF01025">
    <property type="entry name" value="GrpE"/>
    <property type="match status" value="1"/>
</dbReference>
<dbReference type="PRINTS" id="PR00773">
    <property type="entry name" value="GRPEPROTEIN"/>
</dbReference>
<dbReference type="SUPFAM" id="SSF58014">
    <property type="entry name" value="Coiled-coil domain of nucleotide exchange factor GrpE"/>
    <property type="match status" value="1"/>
</dbReference>
<dbReference type="SUPFAM" id="SSF51064">
    <property type="entry name" value="Head domain of nucleotide exchange factor GrpE"/>
    <property type="match status" value="1"/>
</dbReference>
<dbReference type="PROSITE" id="PS01071">
    <property type="entry name" value="GRPE"/>
    <property type="match status" value="1"/>
</dbReference>
<name>GRPE_SHIF8</name>
<protein>
    <recommendedName>
        <fullName evidence="1">Protein GrpE</fullName>
    </recommendedName>
    <alternativeName>
        <fullName evidence="1">HSP-70 cofactor</fullName>
    </alternativeName>
</protein>
<evidence type="ECO:0000255" key="1">
    <source>
        <dbReference type="HAMAP-Rule" id="MF_01151"/>
    </source>
</evidence>
<evidence type="ECO:0000256" key="2">
    <source>
        <dbReference type="SAM" id="MobiDB-lite"/>
    </source>
</evidence>
<reference key="1">
    <citation type="journal article" date="2006" name="BMC Genomics">
        <title>Complete genome sequence of Shigella flexneri 5b and comparison with Shigella flexneri 2a.</title>
        <authorList>
            <person name="Nie H."/>
            <person name="Yang F."/>
            <person name="Zhang X."/>
            <person name="Yang J."/>
            <person name="Chen L."/>
            <person name="Wang J."/>
            <person name="Xiong Z."/>
            <person name="Peng J."/>
            <person name="Sun L."/>
            <person name="Dong J."/>
            <person name="Xue Y."/>
            <person name="Xu X."/>
            <person name="Chen S."/>
            <person name="Yao Z."/>
            <person name="Shen Y."/>
            <person name="Jin Q."/>
        </authorList>
    </citation>
    <scope>NUCLEOTIDE SEQUENCE [LARGE SCALE GENOMIC DNA]</scope>
    <source>
        <strain>8401</strain>
    </source>
</reference>